<proteinExistence type="inferred from homology"/>
<organism>
    <name type="scientific">Debaryomyces hansenii (strain ATCC 36239 / CBS 767 / BCRC 21394 / JCM 1990 / NBRC 0083 / IGC 2968)</name>
    <name type="common">Yeast</name>
    <name type="synonym">Torulaspora hansenii</name>
    <dbReference type="NCBI Taxonomy" id="284592"/>
    <lineage>
        <taxon>Eukaryota</taxon>
        <taxon>Fungi</taxon>
        <taxon>Dikarya</taxon>
        <taxon>Ascomycota</taxon>
        <taxon>Saccharomycotina</taxon>
        <taxon>Pichiomycetes</taxon>
        <taxon>Debaryomycetaceae</taxon>
        <taxon>Debaryomyces</taxon>
    </lineage>
</organism>
<sequence length="142" mass="16861">MFRNIQKRNISSSGRVLLNHGKPQNPVYNAELTMKIEPIQRTGESIDVKRARLVYQSRKRGILESDLLLSRFAKRYLSGFSQEELDEYDKLLDEPDWDIYYWATKNYDVTPLPDKWKNSKILKLLQEDAENKEKEILRMPEL</sequence>
<accession>Q6BPG7</accession>
<comment type="function">
    <text evidence="1">Plays an essential role in the assembly of succinate dehydrogenase (SDH), an enzyme complex (also referred to as respiratory complex II) that is a component of both the tricarboxylic acid (TCA) cycle and the mitochondrial electron transport chain, and which couples the oxidation of succinate to fumarate with the reduction of ubiquinone (coenzyme Q) to ubiquinol. Required for flavinylation (covalent attachment of FAD) of the flavoprotein subunit of the SDH catalytic dimer.</text>
</comment>
<comment type="subunit">
    <text evidence="1">Interacts with the flavoprotein subunit within the SDH catalytic dimer.</text>
</comment>
<comment type="subcellular location">
    <subcellularLocation>
        <location evidence="1">Mitochondrion matrix</location>
    </subcellularLocation>
</comment>
<comment type="miscellaneous">
    <text evidence="1">This protein may be expected to contain an N-terminal transit peptide but none has been predicted.</text>
</comment>
<comment type="similarity">
    <text evidence="1">Belongs to the SDHAF2 family.</text>
</comment>
<feature type="chain" id="PRO_0000383192" description="Succinate dehydrogenase assembly factor 2, mitochondrial">
    <location>
        <begin position="1"/>
        <end position="142"/>
    </location>
</feature>
<protein>
    <recommendedName>
        <fullName evidence="1">Succinate dehydrogenase assembly factor 2, mitochondrial</fullName>
        <shortName evidence="1">SDH assembly factor 2</shortName>
        <shortName evidence="1">SDHAF2</shortName>
    </recommendedName>
</protein>
<evidence type="ECO:0000255" key="1">
    <source>
        <dbReference type="HAMAP-Rule" id="MF_03057"/>
    </source>
</evidence>
<reference key="1">
    <citation type="journal article" date="2004" name="Nature">
        <title>Genome evolution in yeasts.</title>
        <authorList>
            <person name="Dujon B."/>
            <person name="Sherman D."/>
            <person name="Fischer G."/>
            <person name="Durrens P."/>
            <person name="Casaregola S."/>
            <person name="Lafontaine I."/>
            <person name="de Montigny J."/>
            <person name="Marck C."/>
            <person name="Neuveglise C."/>
            <person name="Talla E."/>
            <person name="Goffard N."/>
            <person name="Frangeul L."/>
            <person name="Aigle M."/>
            <person name="Anthouard V."/>
            <person name="Babour A."/>
            <person name="Barbe V."/>
            <person name="Barnay S."/>
            <person name="Blanchin S."/>
            <person name="Beckerich J.-M."/>
            <person name="Beyne E."/>
            <person name="Bleykasten C."/>
            <person name="Boisrame A."/>
            <person name="Boyer J."/>
            <person name="Cattolico L."/>
            <person name="Confanioleri F."/>
            <person name="de Daruvar A."/>
            <person name="Despons L."/>
            <person name="Fabre E."/>
            <person name="Fairhead C."/>
            <person name="Ferry-Dumazet H."/>
            <person name="Groppi A."/>
            <person name="Hantraye F."/>
            <person name="Hennequin C."/>
            <person name="Jauniaux N."/>
            <person name="Joyet P."/>
            <person name="Kachouri R."/>
            <person name="Kerrest A."/>
            <person name="Koszul R."/>
            <person name="Lemaire M."/>
            <person name="Lesur I."/>
            <person name="Ma L."/>
            <person name="Muller H."/>
            <person name="Nicaud J.-M."/>
            <person name="Nikolski M."/>
            <person name="Oztas S."/>
            <person name="Ozier-Kalogeropoulos O."/>
            <person name="Pellenz S."/>
            <person name="Potier S."/>
            <person name="Richard G.-F."/>
            <person name="Straub M.-L."/>
            <person name="Suleau A."/>
            <person name="Swennen D."/>
            <person name="Tekaia F."/>
            <person name="Wesolowski-Louvel M."/>
            <person name="Westhof E."/>
            <person name="Wirth B."/>
            <person name="Zeniou-Meyer M."/>
            <person name="Zivanovic Y."/>
            <person name="Bolotin-Fukuhara M."/>
            <person name="Thierry A."/>
            <person name="Bouchier C."/>
            <person name="Caudron B."/>
            <person name="Scarpelli C."/>
            <person name="Gaillardin C."/>
            <person name="Weissenbach J."/>
            <person name="Wincker P."/>
            <person name="Souciet J.-L."/>
        </authorList>
    </citation>
    <scope>NUCLEOTIDE SEQUENCE [LARGE SCALE GENOMIC DNA]</scope>
    <source>
        <strain>ATCC 36239 / CBS 767 / BCRC 21394 / JCM 1990 / NBRC 0083 / IGC 2968</strain>
    </source>
</reference>
<name>SDHF2_DEBHA</name>
<dbReference type="EMBL" id="CR382137">
    <property type="protein sequence ID" value="CAG88145.1"/>
    <property type="molecule type" value="Genomic_DNA"/>
</dbReference>
<dbReference type="RefSeq" id="XP_459903.1">
    <property type="nucleotide sequence ID" value="XM_459903.1"/>
</dbReference>
<dbReference type="SMR" id="Q6BPG7"/>
<dbReference type="FunCoup" id="Q6BPG7">
    <property type="interactions" value="333"/>
</dbReference>
<dbReference type="STRING" id="284592.Q6BPG7"/>
<dbReference type="GeneID" id="2902329"/>
<dbReference type="KEGG" id="dha:DEHA2E13750g"/>
<dbReference type="VEuPathDB" id="FungiDB:DEHA2E13750g"/>
<dbReference type="eggNOG" id="KOG3326">
    <property type="taxonomic scope" value="Eukaryota"/>
</dbReference>
<dbReference type="HOGENOM" id="CLU_103054_0_1_1"/>
<dbReference type="InParanoid" id="Q6BPG7"/>
<dbReference type="OMA" id="YGKPQNP"/>
<dbReference type="OrthoDB" id="284292at2759"/>
<dbReference type="Proteomes" id="UP000000599">
    <property type="component" value="Chromosome E"/>
</dbReference>
<dbReference type="GO" id="GO:0005759">
    <property type="term" value="C:mitochondrial matrix"/>
    <property type="evidence" value="ECO:0000250"/>
    <property type="project" value="UniProtKB"/>
</dbReference>
<dbReference type="GO" id="GO:0006121">
    <property type="term" value="P:mitochondrial electron transport, succinate to ubiquinone"/>
    <property type="evidence" value="ECO:0000250"/>
    <property type="project" value="UniProtKB"/>
</dbReference>
<dbReference type="GO" id="GO:0034553">
    <property type="term" value="P:mitochondrial respiratory chain complex II assembly"/>
    <property type="evidence" value="ECO:0007669"/>
    <property type="project" value="TreeGrafter"/>
</dbReference>
<dbReference type="GO" id="GO:0018293">
    <property type="term" value="P:protein-FAD linkage"/>
    <property type="evidence" value="ECO:0000250"/>
    <property type="project" value="UniProtKB"/>
</dbReference>
<dbReference type="GO" id="GO:0006099">
    <property type="term" value="P:tricarboxylic acid cycle"/>
    <property type="evidence" value="ECO:0007669"/>
    <property type="project" value="TreeGrafter"/>
</dbReference>
<dbReference type="FunFam" id="1.10.150.250:FF:000002">
    <property type="entry name" value="Succinate dehydrogenase assembly factor 2, mitochondrial"/>
    <property type="match status" value="1"/>
</dbReference>
<dbReference type="Gene3D" id="1.10.150.250">
    <property type="entry name" value="Flavinator of succinate dehydrogenase"/>
    <property type="match status" value="1"/>
</dbReference>
<dbReference type="HAMAP" id="MF_03057">
    <property type="entry name" value="SDHAF2"/>
    <property type="match status" value="1"/>
</dbReference>
<dbReference type="InterPro" id="IPR005631">
    <property type="entry name" value="SDH"/>
</dbReference>
<dbReference type="InterPro" id="IPR036714">
    <property type="entry name" value="SDH_sf"/>
</dbReference>
<dbReference type="InterPro" id="IPR028882">
    <property type="entry name" value="SDHAF2"/>
</dbReference>
<dbReference type="PANTHER" id="PTHR12469">
    <property type="entry name" value="PROTEIN EMI5 HOMOLOG, MITOCHONDRIAL"/>
    <property type="match status" value="1"/>
</dbReference>
<dbReference type="PANTHER" id="PTHR12469:SF2">
    <property type="entry name" value="SUCCINATE DEHYDROGENASE ASSEMBLY FACTOR 2, MITOCHONDRIAL"/>
    <property type="match status" value="1"/>
</dbReference>
<dbReference type="Pfam" id="PF03937">
    <property type="entry name" value="Sdh5"/>
    <property type="match status" value="1"/>
</dbReference>
<dbReference type="SUPFAM" id="SSF109910">
    <property type="entry name" value="YgfY-like"/>
    <property type="match status" value="1"/>
</dbReference>
<keyword id="KW-0143">Chaperone</keyword>
<keyword id="KW-0496">Mitochondrion</keyword>
<keyword id="KW-1185">Reference proteome</keyword>
<gene>
    <name type="ordered locus">DEHA2E13750g</name>
</gene>